<protein>
    <recommendedName>
        <fullName evidence="1">Heat shock protein HspQ</fullName>
    </recommendedName>
</protein>
<accession>B5QZG9</accession>
<sequence>MIASKFGIGQQVRHSLLGYLGVVVDIDPEYSLDEPSPDELAVNDELRAAPWYHVVMEDDDGQPVHTYLAEAQLRSEMRDEHPEQPSMDELARTIRKQLQAPRLRN</sequence>
<comment type="function">
    <text evidence="1">Involved in the degradation of certain denaturated proteins, including DnaA, during heat shock stress.</text>
</comment>
<comment type="subcellular location">
    <subcellularLocation>
        <location evidence="1">Cytoplasm</location>
    </subcellularLocation>
</comment>
<comment type="similarity">
    <text evidence="1">Belongs to the HspQ family.</text>
</comment>
<name>HSPQ_SALEP</name>
<gene>
    <name evidence="1" type="primary">hspQ</name>
    <name type="ordered locus">SEN0944</name>
</gene>
<keyword id="KW-0963">Cytoplasm</keyword>
<keyword id="KW-0346">Stress response</keyword>
<proteinExistence type="inferred from homology"/>
<dbReference type="EMBL" id="AM933172">
    <property type="protein sequence ID" value="CAR32527.1"/>
    <property type="molecule type" value="Genomic_DNA"/>
</dbReference>
<dbReference type="RefSeq" id="WP_000561983.1">
    <property type="nucleotide sequence ID" value="NC_011294.1"/>
</dbReference>
<dbReference type="SMR" id="B5QZG9"/>
<dbReference type="GeneID" id="66755429"/>
<dbReference type="KEGG" id="set:SEN0944"/>
<dbReference type="HOGENOM" id="CLU_123865_1_0_6"/>
<dbReference type="Proteomes" id="UP000000613">
    <property type="component" value="Chromosome"/>
</dbReference>
<dbReference type="GO" id="GO:0005737">
    <property type="term" value="C:cytoplasm"/>
    <property type="evidence" value="ECO:0007669"/>
    <property type="project" value="UniProtKB-SubCell"/>
</dbReference>
<dbReference type="GO" id="GO:0003677">
    <property type="term" value="F:DNA binding"/>
    <property type="evidence" value="ECO:0007669"/>
    <property type="project" value="InterPro"/>
</dbReference>
<dbReference type="GO" id="GO:0009408">
    <property type="term" value="P:response to heat"/>
    <property type="evidence" value="ECO:0007669"/>
    <property type="project" value="UniProtKB-UniRule"/>
</dbReference>
<dbReference type="Gene3D" id="2.30.30.390">
    <property type="entry name" value="Hemimethylated DNA-binding domain"/>
    <property type="match status" value="1"/>
</dbReference>
<dbReference type="HAMAP" id="MF_01194">
    <property type="entry name" value="HspQ"/>
    <property type="match status" value="1"/>
</dbReference>
<dbReference type="InterPro" id="IPR011722">
    <property type="entry name" value="Hemimethylated_DNA-bd_dom"/>
</dbReference>
<dbReference type="InterPro" id="IPR036623">
    <property type="entry name" value="Hemimethylated_DNA-bd_sf"/>
</dbReference>
<dbReference type="InterPro" id="IPR022866">
    <property type="entry name" value="HspQ"/>
</dbReference>
<dbReference type="NCBIfam" id="NF010729">
    <property type="entry name" value="PRK14129.1"/>
    <property type="match status" value="1"/>
</dbReference>
<dbReference type="NCBIfam" id="TIGR02097">
    <property type="entry name" value="yccV"/>
    <property type="match status" value="1"/>
</dbReference>
<dbReference type="Pfam" id="PF08755">
    <property type="entry name" value="YccV-like"/>
    <property type="match status" value="1"/>
</dbReference>
<dbReference type="SMART" id="SM00992">
    <property type="entry name" value="YccV-like"/>
    <property type="match status" value="1"/>
</dbReference>
<dbReference type="SUPFAM" id="SSF141255">
    <property type="entry name" value="YccV-like"/>
    <property type="match status" value="1"/>
</dbReference>
<organism>
    <name type="scientific">Salmonella enteritidis PT4 (strain P125109)</name>
    <dbReference type="NCBI Taxonomy" id="550537"/>
    <lineage>
        <taxon>Bacteria</taxon>
        <taxon>Pseudomonadati</taxon>
        <taxon>Pseudomonadota</taxon>
        <taxon>Gammaproteobacteria</taxon>
        <taxon>Enterobacterales</taxon>
        <taxon>Enterobacteriaceae</taxon>
        <taxon>Salmonella</taxon>
    </lineage>
</organism>
<feature type="chain" id="PRO_1000138415" description="Heat shock protein HspQ">
    <location>
        <begin position="1"/>
        <end position="105"/>
    </location>
</feature>
<feature type="region of interest" description="Disordered" evidence="2">
    <location>
        <begin position="76"/>
        <end position="105"/>
    </location>
</feature>
<evidence type="ECO:0000255" key="1">
    <source>
        <dbReference type="HAMAP-Rule" id="MF_01194"/>
    </source>
</evidence>
<evidence type="ECO:0000256" key="2">
    <source>
        <dbReference type="SAM" id="MobiDB-lite"/>
    </source>
</evidence>
<reference key="1">
    <citation type="journal article" date="2008" name="Genome Res.">
        <title>Comparative genome analysis of Salmonella enteritidis PT4 and Salmonella gallinarum 287/91 provides insights into evolutionary and host adaptation pathways.</title>
        <authorList>
            <person name="Thomson N.R."/>
            <person name="Clayton D.J."/>
            <person name="Windhorst D."/>
            <person name="Vernikos G."/>
            <person name="Davidson S."/>
            <person name="Churcher C."/>
            <person name="Quail M.A."/>
            <person name="Stevens M."/>
            <person name="Jones M.A."/>
            <person name="Watson M."/>
            <person name="Barron A."/>
            <person name="Layton A."/>
            <person name="Pickard D."/>
            <person name="Kingsley R.A."/>
            <person name="Bignell A."/>
            <person name="Clark L."/>
            <person name="Harris B."/>
            <person name="Ormond D."/>
            <person name="Abdellah Z."/>
            <person name="Brooks K."/>
            <person name="Cherevach I."/>
            <person name="Chillingworth T."/>
            <person name="Woodward J."/>
            <person name="Norberczak H."/>
            <person name="Lord A."/>
            <person name="Arrowsmith C."/>
            <person name="Jagels K."/>
            <person name="Moule S."/>
            <person name="Mungall K."/>
            <person name="Saunders M."/>
            <person name="Whitehead S."/>
            <person name="Chabalgoity J.A."/>
            <person name="Maskell D."/>
            <person name="Humphreys T."/>
            <person name="Roberts M."/>
            <person name="Barrow P.A."/>
            <person name="Dougan G."/>
            <person name="Parkhill J."/>
        </authorList>
    </citation>
    <scope>NUCLEOTIDE SEQUENCE [LARGE SCALE GENOMIC DNA]</scope>
    <source>
        <strain>P125109</strain>
    </source>
</reference>